<proteinExistence type="evidence at transcript level"/>
<feature type="chain" id="PRO_0000357490" description="Katanin p60 ATPase-containing subunit A1">
    <location>
        <begin position="1"/>
        <end position="491"/>
    </location>
</feature>
<feature type="region of interest" description="Interaction with microtubules" evidence="1">
    <location>
        <begin position="1"/>
        <end position="185"/>
    </location>
</feature>
<feature type="region of interest" description="Interaction with dynein and NDEL1" evidence="1">
    <location>
        <begin position="1"/>
        <end position="75"/>
    </location>
</feature>
<feature type="region of interest" description="Interaction with KATNB1" evidence="1">
    <location>
        <begin position="1"/>
        <end position="29"/>
    </location>
</feature>
<feature type="region of interest" description="Disordered" evidence="5">
    <location>
        <begin position="87"/>
        <end position="185"/>
    </location>
</feature>
<feature type="compositionally biased region" description="Basic and acidic residues" evidence="5">
    <location>
        <begin position="145"/>
        <end position="169"/>
    </location>
</feature>
<feature type="binding site" evidence="4">
    <location>
        <begin position="249"/>
        <end position="256"/>
    </location>
    <ligand>
        <name>ATP</name>
        <dbReference type="ChEBI" id="CHEBI:30616"/>
    </ligand>
</feature>
<feature type="modified residue" description="Phosphoserine; by DYRK2" evidence="2 4">
    <location>
        <position position="42"/>
    </location>
</feature>
<feature type="modified residue" description="Phosphoserine; by DYRK2" evidence="2 4">
    <location>
        <position position="109"/>
    </location>
</feature>
<feature type="modified residue" description="Phosphothreonine; by DYRK2" evidence="2 4">
    <location>
        <position position="133"/>
    </location>
</feature>
<feature type="modified residue" description="Phosphoserine" evidence="2">
    <location>
        <position position="170"/>
    </location>
</feature>
<keyword id="KW-0067">ATP-binding</keyword>
<keyword id="KW-0131">Cell cycle</keyword>
<keyword id="KW-0132">Cell division</keyword>
<keyword id="KW-0963">Cytoplasm</keyword>
<keyword id="KW-0206">Cytoskeleton</keyword>
<keyword id="KW-0413">Isomerase</keyword>
<keyword id="KW-0493">Microtubule</keyword>
<keyword id="KW-0498">Mitosis</keyword>
<keyword id="KW-0547">Nucleotide-binding</keyword>
<keyword id="KW-0597">Phosphoprotein</keyword>
<keyword id="KW-1185">Reference proteome</keyword>
<keyword id="KW-0832">Ubl conjugation</keyword>
<name>KTNA1_MACFA</name>
<dbReference type="EC" id="5.6.1.1" evidence="4"/>
<dbReference type="EMBL" id="AB179108">
    <property type="protein sequence ID" value="BAE02159.1"/>
    <property type="molecule type" value="mRNA"/>
</dbReference>
<dbReference type="RefSeq" id="NP_001272255.1">
    <property type="nucleotide sequence ID" value="NM_001285326.1"/>
</dbReference>
<dbReference type="RefSeq" id="XP_045247318.2">
    <property type="nucleotide sequence ID" value="XM_045391383.2"/>
</dbReference>
<dbReference type="SMR" id="Q4R407"/>
<dbReference type="STRING" id="9541.ENSMFAP00000025343"/>
<dbReference type="Ensembl" id="ENSMFAT00000033496.2">
    <property type="protein sequence ID" value="ENSMFAP00000025348.2"/>
    <property type="gene ID" value="ENSMFAG00000044145.2"/>
</dbReference>
<dbReference type="GeneID" id="101864950"/>
<dbReference type="eggNOG" id="KOG0738">
    <property type="taxonomic scope" value="Eukaryota"/>
</dbReference>
<dbReference type="GeneTree" id="ENSGT00940000156638"/>
<dbReference type="Proteomes" id="UP000233100">
    <property type="component" value="Chromosome 4"/>
</dbReference>
<dbReference type="Bgee" id="ENSMFAG00000044145">
    <property type="expression patterns" value="Expressed in lymph node and 13 other cell types or tissues"/>
</dbReference>
<dbReference type="GO" id="GO:0005813">
    <property type="term" value="C:centrosome"/>
    <property type="evidence" value="ECO:0007669"/>
    <property type="project" value="UniProtKB-SubCell"/>
</dbReference>
<dbReference type="GO" id="GO:0031463">
    <property type="term" value="C:Cul3-RING ubiquitin ligase complex"/>
    <property type="evidence" value="ECO:0000250"/>
    <property type="project" value="UniProtKB"/>
</dbReference>
<dbReference type="GO" id="GO:0005737">
    <property type="term" value="C:cytoplasm"/>
    <property type="evidence" value="ECO:0000250"/>
    <property type="project" value="UniProtKB"/>
</dbReference>
<dbReference type="GO" id="GO:0008352">
    <property type="term" value="C:katanin complex"/>
    <property type="evidence" value="ECO:0007669"/>
    <property type="project" value="Ensembl"/>
</dbReference>
<dbReference type="GO" id="GO:0005874">
    <property type="term" value="C:microtubule"/>
    <property type="evidence" value="ECO:0007669"/>
    <property type="project" value="UniProtKB-KW"/>
</dbReference>
<dbReference type="GO" id="GO:0030496">
    <property type="term" value="C:midbody"/>
    <property type="evidence" value="ECO:0000250"/>
    <property type="project" value="UniProtKB"/>
</dbReference>
<dbReference type="GO" id="GO:0097431">
    <property type="term" value="C:mitotic spindle pole"/>
    <property type="evidence" value="ECO:0000250"/>
    <property type="project" value="UniProtKB"/>
</dbReference>
<dbReference type="GO" id="GO:0005819">
    <property type="term" value="C:spindle"/>
    <property type="evidence" value="ECO:0000250"/>
    <property type="project" value="UniProtKB"/>
</dbReference>
<dbReference type="GO" id="GO:0000922">
    <property type="term" value="C:spindle pole"/>
    <property type="evidence" value="ECO:0000250"/>
    <property type="project" value="UniProtKB"/>
</dbReference>
<dbReference type="GO" id="GO:0005524">
    <property type="term" value="F:ATP binding"/>
    <property type="evidence" value="ECO:0007669"/>
    <property type="project" value="UniProtKB-KW"/>
</dbReference>
<dbReference type="GO" id="GO:0016887">
    <property type="term" value="F:ATP hydrolysis activity"/>
    <property type="evidence" value="ECO:0007669"/>
    <property type="project" value="InterPro"/>
</dbReference>
<dbReference type="GO" id="GO:0008017">
    <property type="term" value="F:microtubule binding"/>
    <property type="evidence" value="ECO:0007669"/>
    <property type="project" value="UniProtKB-UniRule"/>
</dbReference>
<dbReference type="GO" id="GO:0008568">
    <property type="term" value="F:microtubule severing ATPase activity"/>
    <property type="evidence" value="ECO:0007669"/>
    <property type="project" value="UniProtKB-EC"/>
</dbReference>
<dbReference type="GO" id="GO:0046982">
    <property type="term" value="F:protein heterodimerization activity"/>
    <property type="evidence" value="ECO:0007669"/>
    <property type="project" value="Ensembl"/>
</dbReference>
<dbReference type="GO" id="GO:0051301">
    <property type="term" value="P:cell division"/>
    <property type="evidence" value="ECO:0007669"/>
    <property type="project" value="UniProtKB-KW"/>
</dbReference>
<dbReference type="GO" id="GO:0031122">
    <property type="term" value="P:cytoplasmic microtubule organization"/>
    <property type="evidence" value="ECO:0007669"/>
    <property type="project" value="Ensembl"/>
</dbReference>
<dbReference type="GO" id="GO:0051013">
    <property type="term" value="P:microtubule severing"/>
    <property type="evidence" value="ECO:0007669"/>
    <property type="project" value="UniProtKB-UniRule"/>
</dbReference>
<dbReference type="CDD" id="cd21748">
    <property type="entry name" value="Kp60-NTD"/>
    <property type="match status" value="1"/>
</dbReference>
<dbReference type="CDD" id="cd19522">
    <property type="entry name" value="RecA-like_KTNA1"/>
    <property type="match status" value="1"/>
</dbReference>
<dbReference type="FunFam" id="1.10.8.60:FF:000025">
    <property type="entry name" value="Katanin p60 ATPase-containing subunit A1"/>
    <property type="match status" value="1"/>
</dbReference>
<dbReference type="FunFam" id="1.20.58.80:FF:000003">
    <property type="entry name" value="Katanin p60 ATPase-containing subunit A1"/>
    <property type="match status" value="1"/>
</dbReference>
<dbReference type="FunFam" id="3.40.50.300:FF:000159">
    <property type="entry name" value="Katanin p60 ATPase-containing subunit A1"/>
    <property type="match status" value="1"/>
</dbReference>
<dbReference type="Gene3D" id="1.10.8.60">
    <property type="match status" value="1"/>
</dbReference>
<dbReference type="Gene3D" id="3.40.50.300">
    <property type="entry name" value="P-loop containing nucleotide triphosphate hydrolases"/>
    <property type="match status" value="1"/>
</dbReference>
<dbReference type="Gene3D" id="1.20.58.80">
    <property type="entry name" value="Phosphotransferase system, lactose/cellobiose-type IIA subunit"/>
    <property type="match status" value="1"/>
</dbReference>
<dbReference type="HAMAP" id="MF_03023">
    <property type="entry name" value="Katanin_p60_A1"/>
    <property type="match status" value="1"/>
</dbReference>
<dbReference type="InterPro" id="IPR003593">
    <property type="entry name" value="AAA+_ATPase"/>
</dbReference>
<dbReference type="InterPro" id="IPR041569">
    <property type="entry name" value="AAA_lid_3"/>
</dbReference>
<dbReference type="InterPro" id="IPR003959">
    <property type="entry name" value="ATPase_AAA_core"/>
</dbReference>
<dbReference type="InterPro" id="IPR003960">
    <property type="entry name" value="ATPase_AAA_CS"/>
</dbReference>
<dbReference type="InterPro" id="IPR028596">
    <property type="entry name" value="KATNA1"/>
</dbReference>
<dbReference type="InterPro" id="IPR048611">
    <property type="entry name" value="KATNA1_MIT"/>
</dbReference>
<dbReference type="InterPro" id="IPR048612">
    <property type="entry name" value="KTNA1_AAA_dom"/>
</dbReference>
<dbReference type="InterPro" id="IPR050304">
    <property type="entry name" value="MT-severing_AAA_ATPase"/>
</dbReference>
<dbReference type="InterPro" id="IPR027417">
    <property type="entry name" value="P-loop_NTPase"/>
</dbReference>
<dbReference type="InterPro" id="IPR015415">
    <property type="entry name" value="Spast_Vps4_C"/>
</dbReference>
<dbReference type="PANTHER" id="PTHR23074">
    <property type="entry name" value="AAA DOMAIN-CONTAINING"/>
    <property type="match status" value="1"/>
</dbReference>
<dbReference type="PANTHER" id="PTHR23074:SF71">
    <property type="entry name" value="KATANIN P60 ATPASE-CONTAINING SUBUNIT A1"/>
    <property type="match status" value="1"/>
</dbReference>
<dbReference type="Pfam" id="PF00004">
    <property type="entry name" value="AAA"/>
    <property type="match status" value="1"/>
</dbReference>
<dbReference type="Pfam" id="PF17862">
    <property type="entry name" value="AAA_lid_3"/>
    <property type="match status" value="1"/>
</dbReference>
<dbReference type="Pfam" id="PF21126">
    <property type="entry name" value="KATNA1_MIT"/>
    <property type="match status" value="1"/>
</dbReference>
<dbReference type="Pfam" id="PF09336">
    <property type="entry name" value="Vps4_C"/>
    <property type="match status" value="1"/>
</dbReference>
<dbReference type="SMART" id="SM00382">
    <property type="entry name" value="AAA"/>
    <property type="match status" value="1"/>
</dbReference>
<dbReference type="SUPFAM" id="SSF52540">
    <property type="entry name" value="P-loop containing nucleoside triphosphate hydrolases"/>
    <property type="match status" value="1"/>
</dbReference>
<dbReference type="PROSITE" id="PS00674">
    <property type="entry name" value="AAA"/>
    <property type="match status" value="1"/>
</dbReference>
<accession>Q4R407</accession>
<reference key="1">
    <citation type="submission" date="2005-06" db="EMBL/GenBank/DDBJ databases">
        <title>DNA sequences of macaque genes expressed in brain or testis and its evolutionary implications.</title>
        <authorList>
            <consortium name="International consortium for macaque cDNA sequencing and analysis"/>
        </authorList>
    </citation>
    <scope>NUCLEOTIDE SEQUENCE [LARGE SCALE MRNA]</scope>
    <source>
        <tissue>Testis</tissue>
    </source>
</reference>
<sequence>MSLLMISENVKLAREYALLGNYDSAMVYYQGVLDQMNKYLYSVKDTYLQQKWQQVWQEINVEAKHVKDIMKTLESFKLDSTPLKAAQHDLPASEGEVWSMPVPVERRPSPGPRKRQSSQYSDSKSHGNRPGTTVRVHRSSAQNLHNDRGKAVRCREKKEQNKGREEKNKSPAAVTEPETNKFDSTGYDKDLVEALERDIISQNPNVRWDDIADLVEAKKLLKEAVVLPMWMPEFFKGIRRPWKGVLMVGPPGTGKTLLAKAVATECKTTFFNVSSSTLTSKYRGESEKLVRLLFEMARFYSPATIFIDEIDSICSRRGTSEEHEASRRVKAELLVQMDGVGGASENDDPSKMVMVLAATNFPWDIDEALRRRLEKRIYIPLPSAKGREELLRISLRELELADDVDLASIAENMEGYSGADITNVCRDASLMAMRRRIEGLTPEEIRNLSKEEMHMPTTMEDFEMALKKVSKSVSAADIERYEKWIFEFGSC</sequence>
<protein>
    <recommendedName>
        <fullName evidence="4">Katanin p60 ATPase-containing subunit A1</fullName>
        <shortName evidence="4">Katanin p60 subunit A1</shortName>
        <ecNumber evidence="4">5.6.1.1</ecNumber>
    </recommendedName>
    <alternativeName>
        <fullName evidence="4">p60 katanin</fullName>
    </alternativeName>
</protein>
<comment type="function">
    <text evidence="4">Catalytic subunit of a complex which severs microtubules in an ATP-dependent manner. Microtubule severing may promote rapid reorganization of cellular microtubule arrays and the release of microtubules from the centrosome following nucleation. Microtubule release from the mitotic spindle poles may allow depolymerization of the microtubule end proximal to the spindle pole, leading to poleward microtubule flux and poleward motion of chromosome. Microtubule release within the cell body of neurons may be required for their transport into neuronal processes by microtubule-dependent motor proteins. This transport is required for axonal growth.</text>
</comment>
<comment type="catalytic activity">
    <reaction evidence="4">
        <text>n ATP + n H2O + a microtubule = n ADP + n phosphate + (n+1) alpha/beta tubulin heterodimers.</text>
        <dbReference type="EC" id="5.6.1.1"/>
    </reaction>
</comment>
<comment type="activity regulation">
    <text evidence="4">ATPase activity is stimulated by microtubules, which promote homooligomerization. ATP-dependent microtubule severing is stimulated by interaction with KATNB1.</text>
</comment>
<comment type="subunit">
    <text evidence="2 3 4">Can homooligomerize into hexameric rings, which may be promoted by interaction with microtubules. Interacts with KATNB1, which may serve as a targeting subunit (By similarity). Interacts with ASPM; the katanin complex formation KATNA1:KATNB1 is required for the association of ASPM (By similarity) Interacts with dynein and NDEL1. Associates with the E3 ligase complex containing DYRK2, EDD/UBR5, DDB1 and DCAF1 proteins (EDVP complex). Interacts with KLHL42 (via the kelch domains). Interacts with CUL3; the interaction is enhanced by KLHL42 (By similarity). Interacts with KATNB1 and KATNBL1 (By similarity). Interacts with CAMSAP2 and CAMSAP3; leading to regulate the length of CAMSAP-decorated microtubule stretches (By similarity).</text>
</comment>
<comment type="subcellular location">
    <subcellularLocation>
        <location evidence="4">Cytoplasm</location>
    </subcellularLocation>
    <subcellularLocation>
        <location evidence="4">Midbody</location>
    </subcellularLocation>
    <subcellularLocation>
        <location evidence="4">Cytoplasm</location>
        <location evidence="4">Cytoskeleton</location>
        <location evidence="4">Microtubule organizing center</location>
        <location evidence="4">Centrosome</location>
    </subcellularLocation>
    <subcellularLocation>
        <location evidence="4">Cytoplasm</location>
        <location evidence="4">Cytoskeleton</location>
        <location evidence="4">Spindle pole</location>
    </subcellularLocation>
    <subcellularLocation>
        <location evidence="2">Cytoplasm</location>
        <location evidence="2">Cytoskeleton</location>
        <location evidence="2">Spindle</location>
    </subcellularLocation>
    <text evidence="2 4">Predominantly cytoplasmic. Localized diffusely in the cytoplasm during the interphase. During metaphase is localized throughout the cell and more widely dispersed than the microtubules. In anaphase and telophase is localized at the midbody region. Also localized to the interphase centrosome and the mitotic spindle poles. Enhanced recruitment to the mitotic spindle poles requires microtubules and interaction with KATNB1 (By similarity). Localizes within the cytoplasm, partially overlapping with microtubules, in interphase and to the mitotic spindle and spindle poles during mitosis (By similarity).</text>
</comment>
<comment type="domain">
    <text evidence="4">The N-terminus is sufficient for interaction with microtubules, although high affinity binding to microtubules also requires an intact C-terminal domain and ATP, which promotes oligomerization.</text>
</comment>
<comment type="PTM">
    <text evidence="4">Phosphorylation by DYRK2 triggers ubiquitination and subsequent degradation.</text>
</comment>
<comment type="PTM">
    <text evidence="4">Ubiquitinated by the BCR(KLHL42) E3 ubiquitin ligase complex, leading to its proteasomal degradation. Ubiquitinated by the EDVP E3 ligase complex and subsequently targeted for proteasomal degradation.</text>
</comment>
<comment type="similarity">
    <text evidence="4">Belongs to the AAA ATPase family. Katanin p60 subunit A1 subfamily.</text>
</comment>
<gene>
    <name evidence="4" type="primary">KATNA1</name>
    <name type="ORF">QtsA-12977</name>
</gene>
<evidence type="ECO:0000250" key="1"/>
<evidence type="ECO:0000250" key="2">
    <source>
        <dbReference type="UniProtKB" id="O75449"/>
    </source>
</evidence>
<evidence type="ECO:0000250" key="3">
    <source>
        <dbReference type="UniProtKB" id="Q9WV86"/>
    </source>
</evidence>
<evidence type="ECO:0000255" key="4">
    <source>
        <dbReference type="HAMAP-Rule" id="MF_03023"/>
    </source>
</evidence>
<evidence type="ECO:0000256" key="5">
    <source>
        <dbReference type="SAM" id="MobiDB-lite"/>
    </source>
</evidence>
<organism>
    <name type="scientific">Macaca fascicularis</name>
    <name type="common">Crab-eating macaque</name>
    <name type="synonym">Cynomolgus monkey</name>
    <dbReference type="NCBI Taxonomy" id="9541"/>
    <lineage>
        <taxon>Eukaryota</taxon>
        <taxon>Metazoa</taxon>
        <taxon>Chordata</taxon>
        <taxon>Craniata</taxon>
        <taxon>Vertebrata</taxon>
        <taxon>Euteleostomi</taxon>
        <taxon>Mammalia</taxon>
        <taxon>Eutheria</taxon>
        <taxon>Euarchontoglires</taxon>
        <taxon>Primates</taxon>
        <taxon>Haplorrhini</taxon>
        <taxon>Catarrhini</taxon>
        <taxon>Cercopithecidae</taxon>
        <taxon>Cercopithecinae</taxon>
        <taxon>Macaca</taxon>
    </lineage>
</organism>